<reference key="1">
    <citation type="journal article" date="1998" name="Nature">
        <title>Deciphering the biology of Mycobacterium tuberculosis from the complete genome sequence.</title>
        <authorList>
            <person name="Cole S.T."/>
            <person name="Brosch R."/>
            <person name="Parkhill J."/>
            <person name="Garnier T."/>
            <person name="Churcher C.M."/>
            <person name="Harris D.E."/>
            <person name="Gordon S.V."/>
            <person name="Eiglmeier K."/>
            <person name="Gas S."/>
            <person name="Barry C.E. III"/>
            <person name="Tekaia F."/>
            <person name="Badcock K."/>
            <person name="Basham D."/>
            <person name="Brown D."/>
            <person name="Chillingworth T."/>
            <person name="Connor R."/>
            <person name="Davies R.M."/>
            <person name="Devlin K."/>
            <person name="Feltwell T."/>
            <person name="Gentles S."/>
            <person name="Hamlin N."/>
            <person name="Holroyd S."/>
            <person name="Hornsby T."/>
            <person name="Jagels K."/>
            <person name="Krogh A."/>
            <person name="McLean J."/>
            <person name="Moule S."/>
            <person name="Murphy L.D."/>
            <person name="Oliver S."/>
            <person name="Osborne J."/>
            <person name="Quail M.A."/>
            <person name="Rajandream M.A."/>
            <person name="Rogers J."/>
            <person name="Rutter S."/>
            <person name="Seeger K."/>
            <person name="Skelton S."/>
            <person name="Squares S."/>
            <person name="Squares R."/>
            <person name="Sulston J.E."/>
            <person name="Taylor K."/>
            <person name="Whitehead S."/>
            <person name="Barrell B.G."/>
        </authorList>
    </citation>
    <scope>NUCLEOTIDE SEQUENCE [LARGE SCALE GENOMIC DNA]</scope>
    <source>
        <strain>ATCC 25618 / H37Rv</strain>
    </source>
</reference>
<reference key="2">
    <citation type="journal article" date="2007" name="Microbiology">
        <title>Experimental determination of translational starts using peptide mass mapping and tandem mass spectrometry within the proteome of Mycobacterium tuberculosis.</title>
        <authorList>
            <person name="Rison S.C."/>
            <person name="Mattow J."/>
            <person name="Jungblut P.R."/>
            <person name="Stoker N.G."/>
        </authorList>
    </citation>
    <scope>IDENTIFICATION BY MASS SPECTROMETRY</scope>
    <scope>DETERMINATION OF TRANSLATIONAL START SITE</scope>
    <scope>CLEAVAGE OF INITIATOR METHIONINE</scope>
    <source>
        <strain>ATCC 25618 / H37Rv</strain>
    </source>
</reference>
<reference key="3">
    <citation type="journal article" date="2011" name="Mol. Cell. Proteomics">
        <title>Proteogenomic analysis of Mycobacterium tuberculosis by high resolution mass spectrometry.</title>
        <authorList>
            <person name="Kelkar D.S."/>
            <person name="Kumar D."/>
            <person name="Kumar P."/>
            <person name="Balakrishnan L."/>
            <person name="Muthusamy B."/>
            <person name="Yadav A.K."/>
            <person name="Shrivastava P."/>
            <person name="Marimuthu A."/>
            <person name="Anand S."/>
            <person name="Sundaram H."/>
            <person name="Kingsbury R."/>
            <person name="Harsha H.C."/>
            <person name="Nair B."/>
            <person name="Prasad T.S."/>
            <person name="Chauhan D.S."/>
            <person name="Katoch K."/>
            <person name="Katoch V.M."/>
            <person name="Kumar P."/>
            <person name="Chaerkady R."/>
            <person name="Ramachandran S."/>
            <person name="Dash D."/>
            <person name="Pandey A."/>
        </authorList>
    </citation>
    <scope>IDENTIFICATION BY MASS SPECTROMETRY [LARGE SCALE ANALYSIS]</scope>
    <source>
        <strain>ATCC 25618 / H37Rv</strain>
    </source>
</reference>
<gene>
    <name type="ordered locus">Rv3143</name>
</gene>
<name>Y3143_MYCTU</name>
<keyword id="KW-0597">Phosphoprotein</keyword>
<keyword id="KW-1185">Reference proteome</keyword>
<keyword id="KW-0902">Two-component regulatory system</keyword>
<organism>
    <name type="scientific">Mycobacterium tuberculosis (strain ATCC 25618 / H37Rv)</name>
    <dbReference type="NCBI Taxonomy" id="83332"/>
    <lineage>
        <taxon>Bacteria</taxon>
        <taxon>Bacillati</taxon>
        <taxon>Actinomycetota</taxon>
        <taxon>Actinomycetes</taxon>
        <taxon>Mycobacteriales</taxon>
        <taxon>Mycobacteriaceae</taxon>
        <taxon>Mycobacterium</taxon>
        <taxon>Mycobacterium tuberculosis complex</taxon>
    </lineage>
</organism>
<accession>P9WGL7</accession>
<accession>L0TEN7</accession>
<accession>P95183</accession>
<accession>Q7D616</accession>
<dbReference type="EMBL" id="AL123456">
    <property type="protein sequence ID" value="CCP45954.1"/>
    <property type="molecule type" value="Genomic_DNA"/>
</dbReference>
<dbReference type="PIR" id="H70646">
    <property type="entry name" value="H70646"/>
</dbReference>
<dbReference type="RefSeq" id="NP_217659.1">
    <property type="nucleotide sequence ID" value="NC_000962.3"/>
</dbReference>
<dbReference type="RefSeq" id="WP_003416410.1">
    <property type="nucleotide sequence ID" value="NZ_NVQJ01000019.1"/>
</dbReference>
<dbReference type="SMR" id="P9WGL7"/>
<dbReference type="STRING" id="83332.Rv3143"/>
<dbReference type="PaxDb" id="83332-Rv3143"/>
<dbReference type="DNASU" id="887576"/>
<dbReference type="GeneID" id="887576"/>
<dbReference type="KEGG" id="mtu:Rv3143"/>
<dbReference type="KEGG" id="mtv:RVBD_3143"/>
<dbReference type="TubercuList" id="Rv3143"/>
<dbReference type="eggNOG" id="COG0784">
    <property type="taxonomic scope" value="Bacteria"/>
</dbReference>
<dbReference type="InParanoid" id="P9WGL7"/>
<dbReference type="OrthoDB" id="3395459at2"/>
<dbReference type="PhylomeDB" id="P9WGL7"/>
<dbReference type="Proteomes" id="UP000001584">
    <property type="component" value="Chromosome"/>
</dbReference>
<dbReference type="GO" id="GO:0009274">
    <property type="term" value="C:peptidoglycan-based cell wall"/>
    <property type="evidence" value="ECO:0007005"/>
    <property type="project" value="MTBBASE"/>
</dbReference>
<dbReference type="GO" id="GO:0000160">
    <property type="term" value="P:phosphorelay signal transduction system"/>
    <property type="evidence" value="ECO:0007669"/>
    <property type="project" value="UniProtKB-KW"/>
</dbReference>
<dbReference type="Gene3D" id="3.40.50.2300">
    <property type="match status" value="1"/>
</dbReference>
<dbReference type="InterPro" id="IPR011006">
    <property type="entry name" value="CheY-like_superfamily"/>
</dbReference>
<dbReference type="InterPro" id="IPR001789">
    <property type="entry name" value="Sig_transdc_resp-reg_receiver"/>
</dbReference>
<dbReference type="SMART" id="SM00448">
    <property type="entry name" value="REC"/>
    <property type="match status" value="1"/>
</dbReference>
<dbReference type="SUPFAM" id="SSF52172">
    <property type="entry name" value="CheY-like"/>
    <property type="match status" value="1"/>
</dbReference>
<dbReference type="PROSITE" id="PS50110">
    <property type="entry name" value="RESPONSE_REGULATORY"/>
    <property type="match status" value="1"/>
</dbReference>
<feature type="initiator methionine" description="Removed" evidence="2">
    <location>
        <position position="1"/>
    </location>
</feature>
<feature type="chain" id="PRO_0000403682" description="Uncharacterized response regulatory protein Rv3143">
    <location>
        <begin position="2"/>
        <end position="133"/>
    </location>
</feature>
<feature type="domain" description="Response regulatory" evidence="1">
    <location>
        <begin position="9"/>
        <end position="128"/>
    </location>
</feature>
<feature type="modified residue" description="4-aspartylphosphate" evidence="1">
    <location>
        <position position="64"/>
    </location>
</feature>
<protein>
    <recommendedName>
        <fullName>Uncharacterized response regulatory protein Rv3143</fullName>
    </recommendedName>
</protein>
<evidence type="ECO:0000255" key="1">
    <source>
        <dbReference type="PROSITE-ProRule" id="PRU00169"/>
    </source>
</evidence>
<evidence type="ECO:0000269" key="2">
    <source>
    </source>
</evidence>
<proteinExistence type="evidence at protein level"/>
<sequence length="133" mass="14386">MPDSSTALRILVYSDNVQTRERVMRALGKRLHPDLPDLTYVEVATGPMVIRQMDRGGIDLAILDGEATPTGGMGIAKQLKDELASCPPILVLTGRPDDTWLASWSRAEAAVPHPVDPIVLGRTVLSLLRAPAH</sequence>